<dbReference type="EMBL" id="CP001113">
    <property type="protein sequence ID" value="ACF61477.1"/>
    <property type="molecule type" value="Genomic_DNA"/>
</dbReference>
<dbReference type="RefSeq" id="WP_000845439.1">
    <property type="nucleotide sequence ID" value="NZ_CCMR01000003.1"/>
</dbReference>
<dbReference type="SMR" id="B4SUY5"/>
<dbReference type="KEGG" id="see:SNSL254_A0224"/>
<dbReference type="HOGENOM" id="CLU_015263_7_0_6"/>
<dbReference type="Proteomes" id="UP000008824">
    <property type="component" value="Chromosome"/>
</dbReference>
<dbReference type="GO" id="GO:0005886">
    <property type="term" value="C:plasma membrane"/>
    <property type="evidence" value="ECO:0007669"/>
    <property type="project" value="UniProtKB-SubCell"/>
</dbReference>
<dbReference type="GO" id="GO:0015297">
    <property type="term" value="F:antiporter activity"/>
    <property type="evidence" value="ECO:0007669"/>
    <property type="project" value="UniProtKB-UniRule"/>
</dbReference>
<dbReference type="GO" id="GO:0005247">
    <property type="term" value="F:voltage-gated chloride channel activity"/>
    <property type="evidence" value="ECO:0007669"/>
    <property type="project" value="TreeGrafter"/>
</dbReference>
<dbReference type="CDD" id="cd01031">
    <property type="entry name" value="EriC"/>
    <property type="match status" value="1"/>
</dbReference>
<dbReference type="FunFam" id="1.10.3080.10:FF:000005">
    <property type="entry name" value="H(+)/Cl(-) exchange transporter ClcA"/>
    <property type="match status" value="1"/>
</dbReference>
<dbReference type="Gene3D" id="1.10.3080.10">
    <property type="entry name" value="Clc chloride channel"/>
    <property type="match status" value="1"/>
</dbReference>
<dbReference type="HAMAP" id="MF_01128">
    <property type="entry name" value="CLC_ClcA"/>
    <property type="match status" value="1"/>
</dbReference>
<dbReference type="InterPro" id="IPR023861">
    <property type="entry name" value="Cl-channel_ClcA"/>
</dbReference>
<dbReference type="InterPro" id="IPR014743">
    <property type="entry name" value="Cl-channel_core"/>
</dbReference>
<dbReference type="InterPro" id="IPR001807">
    <property type="entry name" value="ClC"/>
</dbReference>
<dbReference type="NCBIfam" id="NF003640">
    <property type="entry name" value="PRK05277.1"/>
    <property type="match status" value="1"/>
</dbReference>
<dbReference type="PANTHER" id="PTHR45711">
    <property type="entry name" value="CHLORIDE CHANNEL PROTEIN"/>
    <property type="match status" value="1"/>
</dbReference>
<dbReference type="PANTHER" id="PTHR45711:SF6">
    <property type="entry name" value="CHLORIDE CHANNEL PROTEIN"/>
    <property type="match status" value="1"/>
</dbReference>
<dbReference type="Pfam" id="PF00654">
    <property type="entry name" value="Voltage_CLC"/>
    <property type="match status" value="1"/>
</dbReference>
<dbReference type="PRINTS" id="PR00762">
    <property type="entry name" value="CLCHANNEL"/>
</dbReference>
<dbReference type="SUPFAM" id="SSF81340">
    <property type="entry name" value="Clc chloride channel"/>
    <property type="match status" value="1"/>
</dbReference>
<accession>B4SUY5</accession>
<sequence>MKTDTSTFLAQQIVRLRRRDQIRRLMQRDKTPLAILLMAAVVGTLTGLVGVAFEKAVSWVQNMRIGALVQVADHAFLLWPLAFILSALLAMVGYFLVRKFAPEAGGSGIPEIEGALEELRPVRWWRVLPVKFIGGMGTLGAGMVLGREGPTVQIGGNLGRMVLDVFRMRSAEARHTLLATGAAAGLSAAFNAPLAGILFIIEEMRPQFRYNLISIKAVFTGVIMSSIVFRIFNGEAPIIEVGKLSDAPVNTLWLYLILGIIFGCVGPVFNSLVLRTQDMFQRFHGGEIKKWVLMGGAIGGLCGILGLIEPEAAGGGFNLIPIAAAGNFSVGLLLFIFITRVVTTLLCFSSGAPGGIFAPMLALGTLLGTAFGMAAAVLFPQYHLEAGTFAIAGMGALMAASVRAPLTGIVLVLEMTDNYQLILPMIITCLGATLLAQFLGGKPLYSTILARTLAKQDAEQAAKNQNAPAGENT</sequence>
<organism>
    <name type="scientific">Salmonella newport (strain SL254)</name>
    <dbReference type="NCBI Taxonomy" id="423368"/>
    <lineage>
        <taxon>Bacteria</taxon>
        <taxon>Pseudomonadati</taxon>
        <taxon>Pseudomonadota</taxon>
        <taxon>Gammaproteobacteria</taxon>
        <taxon>Enterobacterales</taxon>
        <taxon>Enterobacteriaceae</taxon>
        <taxon>Salmonella</taxon>
    </lineage>
</organism>
<proteinExistence type="inferred from homology"/>
<gene>
    <name evidence="1" type="primary">clcA</name>
    <name evidence="1" type="synonym">eriC</name>
    <name type="ordered locus">SNSL254_A0224</name>
</gene>
<reference key="1">
    <citation type="journal article" date="2011" name="J. Bacteriol.">
        <title>Comparative genomics of 28 Salmonella enterica isolates: evidence for CRISPR-mediated adaptive sublineage evolution.</title>
        <authorList>
            <person name="Fricke W.F."/>
            <person name="Mammel M.K."/>
            <person name="McDermott P.F."/>
            <person name="Tartera C."/>
            <person name="White D.G."/>
            <person name="Leclerc J.E."/>
            <person name="Ravel J."/>
            <person name="Cebula T.A."/>
        </authorList>
    </citation>
    <scope>NUCLEOTIDE SEQUENCE [LARGE SCALE GENOMIC DNA]</scope>
    <source>
        <strain>SL254</strain>
    </source>
</reference>
<name>CLCA_SALNS</name>
<feature type="chain" id="PRO_1000137308" description="H(+)/Cl(-) exchange transporter ClcA">
    <location>
        <begin position="1"/>
        <end position="473"/>
    </location>
</feature>
<feature type="topological domain" description="Cytoplasmic" evidence="1">
    <location>
        <begin position="1"/>
        <end position="32"/>
    </location>
</feature>
<feature type="transmembrane region" description="Helical" evidence="1">
    <location>
        <begin position="33"/>
        <end position="69"/>
    </location>
</feature>
<feature type="topological domain" description="Periplasmic" evidence="1">
    <location>
        <begin position="70"/>
        <end position="76"/>
    </location>
</feature>
<feature type="transmembrane region" description="Helical" evidence="1">
    <location>
        <begin position="77"/>
        <end position="100"/>
    </location>
</feature>
<feature type="intramembrane region" description="Helical" evidence="1">
    <location>
        <begin position="109"/>
        <end position="116"/>
    </location>
</feature>
<feature type="topological domain" description="Cytoplasmic" evidence="1">
    <location>
        <begin position="117"/>
        <end position="123"/>
    </location>
</feature>
<feature type="transmembrane region" description="Helical" evidence="1">
    <location>
        <begin position="124"/>
        <end position="141"/>
    </location>
</feature>
<feature type="transmembrane region" description="Helical" evidence="1">
    <location>
        <begin position="148"/>
        <end position="166"/>
    </location>
</feature>
<feature type="topological domain" description="Cytoplasmic" evidence="1">
    <location>
        <begin position="167"/>
        <end position="176"/>
    </location>
</feature>
<feature type="intramembrane region" description="Helical" evidence="1">
    <location>
        <begin position="177"/>
        <end position="189"/>
    </location>
</feature>
<feature type="intramembrane region" description="Helical" evidence="1">
    <location>
        <begin position="193"/>
        <end position="201"/>
    </location>
</feature>
<feature type="topological domain" description="Cytoplasmic" evidence="1">
    <location>
        <begin position="202"/>
        <end position="214"/>
    </location>
</feature>
<feature type="transmembrane region" description="Helical" evidence="1">
    <location>
        <begin position="215"/>
        <end position="232"/>
    </location>
</feature>
<feature type="topological domain" description="Periplasmic" evidence="1">
    <location>
        <begin position="233"/>
        <end position="252"/>
    </location>
</feature>
<feature type="transmembrane region" description="Helical" evidence="1">
    <location>
        <begin position="253"/>
        <end position="281"/>
    </location>
</feature>
<feature type="topological domain" description="Cytoplasmic" evidence="1">
    <location>
        <begin position="282"/>
        <end position="287"/>
    </location>
</feature>
<feature type="transmembrane region" description="Helical" evidence="1">
    <location>
        <begin position="288"/>
        <end position="309"/>
    </location>
</feature>
<feature type="topological domain" description="Periplasmic" evidence="1">
    <location>
        <begin position="310"/>
        <end position="329"/>
    </location>
</feature>
<feature type="transmembrane region" description="Helical" evidence="1">
    <location>
        <begin position="330"/>
        <end position="349"/>
    </location>
</feature>
<feature type="transmembrane region" description="Helical" evidence="1">
    <location>
        <begin position="355"/>
        <end position="376"/>
    </location>
</feature>
<feature type="topological domain" description="Periplasmic" evidence="1">
    <location>
        <begin position="377"/>
        <end position="386"/>
    </location>
</feature>
<feature type="intramembrane region" description="Helical" evidence="1">
    <location>
        <begin position="387"/>
        <end position="401"/>
    </location>
</feature>
<feature type="intramembrane region" description="Note=Loop between two helices" evidence="1">
    <location>
        <begin position="402"/>
        <end position="404"/>
    </location>
</feature>
<feature type="intramembrane region" description="Helical" evidence="1">
    <location>
        <begin position="405"/>
        <end position="416"/>
    </location>
</feature>
<feature type="intramembrane region" description="Note=Loop between two helices" evidence="1">
    <location>
        <begin position="417"/>
        <end position="421"/>
    </location>
</feature>
<feature type="transmembrane region" description="Helical" evidence="1">
    <location>
        <begin position="422"/>
        <end position="438"/>
    </location>
</feature>
<feature type="topological domain" description="Cytoplasmic" evidence="1">
    <location>
        <begin position="439"/>
        <end position="473"/>
    </location>
</feature>
<feature type="short sequence motif" description="Selectivity filter part_1" evidence="1">
    <location>
        <begin position="106"/>
        <end position="110"/>
    </location>
</feature>
<feature type="short sequence motif" description="Selectivity filter part_2" evidence="1">
    <location>
        <begin position="146"/>
        <end position="150"/>
    </location>
</feature>
<feature type="short sequence motif" description="Selectivity filter part_3" evidence="1">
    <location>
        <begin position="355"/>
        <end position="359"/>
    </location>
</feature>
<feature type="binding site" evidence="1">
    <location>
        <position position="107"/>
    </location>
    <ligand>
        <name>chloride</name>
        <dbReference type="ChEBI" id="CHEBI:17996"/>
    </ligand>
</feature>
<feature type="binding site" evidence="1">
    <location>
        <position position="356"/>
    </location>
    <ligand>
        <name>chloride</name>
        <dbReference type="ChEBI" id="CHEBI:17996"/>
    </ligand>
</feature>
<feature type="binding site" evidence="1">
    <location>
        <position position="357"/>
    </location>
    <ligand>
        <name>chloride</name>
        <dbReference type="ChEBI" id="CHEBI:17996"/>
    </ligand>
</feature>
<feature type="binding site" evidence="1">
    <location>
        <position position="445"/>
    </location>
    <ligand>
        <name>chloride</name>
        <dbReference type="ChEBI" id="CHEBI:17996"/>
    </ligand>
</feature>
<feature type="site" description="Mediates proton transfer from the outer aqueous phase to the interior of the protein; involved in linking H(+) and Cl(-) transport" evidence="1">
    <location>
        <position position="148"/>
    </location>
</feature>
<feature type="site" description="Mediates proton transfer from the protein to the inner aqueous phase" evidence="1">
    <location>
        <position position="203"/>
    </location>
</feature>
<keyword id="KW-0050">Antiport</keyword>
<keyword id="KW-0997">Cell inner membrane</keyword>
<keyword id="KW-1003">Cell membrane</keyword>
<keyword id="KW-0868">Chloride</keyword>
<keyword id="KW-0406">Ion transport</keyword>
<keyword id="KW-0472">Membrane</keyword>
<keyword id="KW-0812">Transmembrane</keyword>
<keyword id="KW-1133">Transmembrane helix</keyword>
<keyword id="KW-0813">Transport</keyword>
<evidence type="ECO:0000255" key="1">
    <source>
        <dbReference type="HAMAP-Rule" id="MF_01128"/>
    </source>
</evidence>
<comment type="function">
    <text evidence="1">Proton-coupled chloride transporter. Functions as antiport system and exchanges two chloride ions for 1 proton. Probably acts as an electrical shunt for an outwardly-directed proton pump that is linked to amino acid decarboxylation, as part of the extreme acid resistance (XAR) response.</text>
</comment>
<comment type="catalytic activity">
    <reaction evidence="1">
        <text>2 chloride(in) + H(+)(out) = 2 chloride(out) + H(+)(in)</text>
        <dbReference type="Rhea" id="RHEA:29567"/>
        <dbReference type="ChEBI" id="CHEBI:15378"/>
        <dbReference type="ChEBI" id="CHEBI:17996"/>
    </reaction>
</comment>
<comment type="subunit">
    <text evidence="1">Homodimer.</text>
</comment>
<comment type="subcellular location">
    <subcellularLocation>
        <location evidence="1">Cell inner membrane</location>
        <topology evidence="1">Multi-pass membrane protein</topology>
    </subcellularLocation>
</comment>
<comment type="similarity">
    <text evidence="1">Belongs to the chloride channel (TC 2.A.49) family. ClcA subfamily.</text>
</comment>
<protein>
    <recommendedName>
        <fullName evidence="1">H(+)/Cl(-) exchange transporter ClcA</fullName>
    </recommendedName>
</protein>